<protein>
    <recommendedName>
        <fullName evidence="8">FAD-dependent monooxygenase FUP4</fullName>
        <ecNumber evidence="6">1.-.-.-</ecNumber>
    </recommendedName>
    <alternativeName>
        <fullName evidence="8">Fusaproliferin biosynthesis cluster protein 4</fullName>
    </alternativeName>
</protein>
<evidence type="ECO:0000250" key="1">
    <source>
        <dbReference type="UniProtKB" id="P08159"/>
    </source>
</evidence>
<evidence type="ECO:0000255" key="2"/>
<evidence type="ECO:0000255" key="3">
    <source>
        <dbReference type="PROSITE-ProRule" id="PRU00498"/>
    </source>
</evidence>
<evidence type="ECO:0000255" key="4">
    <source>
        <dbReference type="PROSITE-ProRule" id="PRU00718"/>
    </source>
</evidence>
<evidence type="ECO:0000269" key="5">
    <source>
    </source>
</evidence>
<evidence type="ECO:0000269" key="6">
    <source>
    </source>
</evidence>
<evidence type="ECO:0000269" key="7">
    <source>
    </source>
</evidence>
<evidence type="ECO:0000303" key="8">
    <source>
    </source>
</evidence>
<evidence type="ECO:0000305" key="9"/>
<reference key="1">
    <citation type="journal article" date="2016" name="Genome Biol. Evol.">
        <title>Comparative 'omics' of the Fusarium fujikuroi species complex highlights differences in genetic potential and metabolite synthesis.</title>
        <authorList>
            <person name="Niehaus E.-M."/>
            <person name="Muensterkoetter M."/>
            <person name="Proctor R.H."/>
            <person name="Brown D.W."/>
            <person name="Sharon A."/>
            <person name="Idan Y."/>
            <person name="Oren-Young L."/>
            <person name="Sieber C.M."/>
            <person name="Novak O."/>
            <person name="Pencik A."/>
            <person name="Tarkowska D."/>
            <person name="Hromadova K."/>
            <person name="Freeman S."/>
            <person name="Maymon M."/>
            <person name="Elazar M."/>
            <person name="Youssef S.A."/>
            <person name="El-Shabrawy E.S.M."/>
            <person name="Shalaby A.B.A."/>
            <person name="Houterman P."/>
            <person name="Brock N.L."/>
            <person name="Burkhardt I."/>
            <person name="Tsavkelova E.A."/>
            <person name="Dickschat J.S."/>
            <person name="Galuszka P."/>
            <person name="Gueldener U."/>
            <person name="Tudzynski B."/>
        </authorList>
    </citation>
    <scope>NUCLEOTIDE SEQUENCE [LARGE SCALE GENOMIC DNA]</scope>
    <source>
        <strain>ET1</strain>
    </source>
</reference>
<reference key="2">
    <citation type="journal article" date="2018" name="Molecules">
        <title>Fusaproliferin, a fungal mycotoxin, shows cytotoxicity against pancreatic cancer cell lines.</title>
        <authorList>
            <person name="Hoque N."/>
            <person name="Hasan C.M."/>
            <person name="Rana M.S."/>
            <person name="Varsha A."/>
            <person name="Sohrab M.H."/>
            <person name="Rahman K.M."/>
        </authorList>
    </citation>
    <scope>BIOTECHNOLOGY</scope>
</reference>
<reference key="3">
    <citation type="journal article" date="2021" name="Toxins">
        <title>Identification and functional characterization of the gene cluster responsible for fusaproliferin biosynthesis in Fusarium proliferatum.</title>
        <authorList>
            <person name="Ceranic A."/>
            <person name="Svoboda T."/>
            <person name="Berthiller F."/>
            <person name="Sulyok M."/>
            <person name="Samson J.M."/>
            <person name="Gueldener U."/>
            <person name="Schuhmacher R."/>
            <person name="Adam G."/>
        </authorList>
    </citation>
    <scope>FUNCTION</scope>
    <scope>CATALYTIC ACTIVITY</scope>
    <scope>DISRUPTION PHENOTYPE</scope>
    <scope>PATHWAY</scope>
</reference>
<reference key="4">
    <citation type="journal article" date="2022" name="Front. Pharmacol.">
        <title>Investigation of the anti-inflammatory activity of fusaproliferin analogues guided by transcriptome analysis.</title>
        <authorList>
            <person name="Kuang Q.X."/>
            <person name="Lei L.R."/>
            <person name="Li Q.Z."/>
            <person name="Peng W."/>
            <person name="Wang Y.M."/>
            <person name="Dai Y.F."/>
            <person name="Wang D."/>
            <person name="Gu Y.C."/>
            <person name="Deng Y."/>
            <person name="Guo D.L."/>
        </authorList>
    </citation>
    <scope>BIOTECHNOLOGY</scope>
</reference>
<proteinExistence type="evidence at protein level"/>
<feature type="signal peptide" evidence="2">
    <location>
        <begin position="1"/>
        <end position="19"/>
    </location>
</feature>
<feature type="chain" id="PRO_5012860460" description="FAD-dependent monooxygenase FUP4" evidence="2">
    <location>
        <begin position="20"/>
        <end position="517"/>
    </location>
</feature>
<feature type="domain" description="FAD-binding PCMH-type" evidence="4">
    <location>
        <begin position="75"/>
        <end position="246"/>
    </location>
</feature>
<feature type="modified residue" description="Pros-8alpha-FAD histidine" evidence="1">
    <location>
        <position position="112"/>
    </location>
</feature>
<feature type="glycosylation site" description="N-linked (GlcNAc...) asparagine" evidence="3">
    <location>
        <position position="163"/>
    </location>
</feature>
<feature type="glycosylation site" description="N-linked (GlcNAc...) asparagine" evidence="3">
    <location>
        <position position="208"/>
    </location>
</feature>
<feature type="glycosylation site" description="N-linked (GlcNAc...) asparagine" evidence="3">
    <location>
        <position position="346"/>
    </location>
</feature>
<comment type="function">
    <text evidence="6">FAD-dependent monooxygenase; part of the gene cluster that mediates the biosynthesis of the mycotoxin fusaproliferin (FUP) that belongs to the class of bicyclic sesterterpenoids (PubMed:34357940). FUP4 catalyzes the oxidation of the hydroxy group at the C-16 position of preterpestacin III to a keto group, leading to the formation of (-)-terpestacin (PubMed:34357940). The product of FUP1, preterpestacin I, might also serve as a substrate of FUP4 to yield oxo-preterpestacin I (PubMed:34357940). The FUP biosynthetic pathway starts with the enzyme encoded by FUP1 that combines a C-terminal prenyltransferase domain responsible for the synthesis of geranylgeranyl diphosphate with the N-terminal terpene cyclase domain, to yield preterpestacin I. Preterpestacin I is then decorated by oxygenation steps that are catalyzed by two cytochrome P450 monooxygenases. First, FUP2 introduces a hydroxyl group at the C-24 position resulting in the formation of preterpestacin IIa. The second P450 monooxygenase catalyzes the hydroxylation at C-16 and C-17 of preterpestacin IIa, producing preterpestacin III. Subsequently, the FAD-dependent oxidoreductase FUP4 catalyzes the oxidation of the hydroxy group at the C-16 position to a keto group, leading to the formation of (-)-terpestacin, which is the immediate precursor of FUP. The final step in the proposed biosynthetic pathway is the addition of an acetyl group at the C-24 position of terpestacin, which is catalyzed by the acetyltransferase FUP5 (PubMed:34357940).</text>
</comment>
<comment type="cofactor">
    <cofactor evidence="9">
        <name>FAD</name>
        <dbReference type="ChEBI" id="CHEBI:57692"/>
    </cofactor>
</comment>
<comment type="pathway">
    <text evidence="6">Secondary metabolite biosynthesis; terpenoid biosynthesis.</text>
</comment>
<comment type="disruption phenotype">
    <text evidence="6">Leads to complete loss of terpestacin and fusaproliferin production and accumulates oxo-preterpestacin I.</text>
</comment>
<comment type="biotechnology">
    <text evidence="5 7">Fusaproliferin shows cytotoxicity against pancreatic cancer cell lines and provides a new chemical scaffold that can be further developed to obtain more potent synthetic agents against pancreatic cancer (PubMed:30545017). Fusaproliferin and its analogs show also anti-inflammatory activity and can be hit compounds for the treatment of inflammation-associated diseases (PubMed:37124719).</text>
</comment>
<comment type="similarity">
    <text evidence="9">Belongs to the oxygen-dependent FAD-linked oxidoreductase family.</text>
</comment>
<gene>
    <name evidence="8" type="primary">FUP4</name>
    <name type="ORF">FPRO_05647</name>
</gene>
<organism>
    <name type="scientific">Fusarium proliferatum (strain ET1)</name>
    <name type="common">Orchid endophyte fungus</name>
    <dbReference type="NCBI Taxonomy" id="1227346"/>
    <lineage>
        <taxon>Eukaryota</taxon>
        <taxon>Fungi</taxon>
        <taxon>Dikarya</taxon>
        <taxon>Ascomycota</taxon>
        <taxon>Pezizomycotina</taxon>
        <taxon>Sordariomycetes</taxon>
        <taxon>Hypocreomycetidae</taxon>
        <taxon>Hypocreales</taxon>
        <taxon>Nectriaceae</taxon>
        <taxon>Fusarium</taxon>
        <taxon>Fusarium fujikuroi species complex</taxon>
    </lineage>
</organism>
<dbReference type="EC" id="1.-.-.-" evidence="6"/>
<dbReference type="EMBL" id="FJOF01000003">
    <property type="protein sequence ID" value="CZR39161.1"/>
    <property type="molecule type" value="Genomic_DNA"/>
</dbReference>
<dbReference type="SMR" id="A0A1L7VET6"/>
<dbReference type="VEuPathDB" id="FungiDB:FPRO_05647"/>
<dbReference type="UniPathway" id="UPA00213"/>
<dbReference type="Proteomes" id="UP000183971">
    <property type="component" value="Unassembled WGS sequence"/>
</dbReference>
<dbReference type="GO" id="GO:0071949">
    <property type="term" value="F:FAD binding"/>
    <property type="evidence" value="ECO:0007669"/>
    <property type="project" value="InterPro"/>
</dbReference>
<dbReference type="GO" id="GO:0016491">
    <property type="term" value="F:oxidoreductase activity"/>
    <property type="evidence" value="ECO:0007669"/>
    <property type="project" value="UniProtKB-KW"/>
</dbReference>
<dbReference type="Gene3D" id="3.30.465.10">
    <property type="match status" value="1"/>
</dbReference>
<dbReference type="Gene3D" id="3.40.462.20">
    <property type="match status" value="1"/>
</dbReference>
<dbReference type="Gene3D" id="3.30.43.10">
    <property type="entry name" value="Uridine Diphospho-n-acetylenolpyruvylglucosamine Reductase, domain 2"/>
    <property type="match status" value="1"/>
</dbReference>
<dbReference type="InterPro" id="IPR016166">
    <property type="entry name" value="FAD-bd_PCMH"/>
</dbReference>
<dbReference type="InterPro" id="IPR036318">
    <property type="entry name" value="FAD-bd_PCMH-like_sf"/>
</dbReference>
<dbReference type="InterPro" id="IPR016167">
    <property type="entry name" value="FAD-bd_PCMH_sub1"/>
</dbReference>
<dbReference type="InterPro" id="IPR016169">
    <property type="entry name" value="FAD-bd_PCMH_sub2"/>
</dbReference>
<dbReference type="InterPro" id="IPR050416">
    <property type="entry name" value="FAD-linked_Oxidoreductase"/>
</dbReference>
<dbReference type="InterPro" id="IPR006094">
    <property type="entry name" value="Oxid_FAD_bind_N"/>
</dbReference>
<dbReference type="PANTHER" id="PTHR42973">
    <property type="entry name" value="BINDING OXIDOREDUCTASE, PUTATIVE (AFU_ORTHOLOGUE AFUA_1G17690)-RELATED"/>
    <property type="match status" value="1"/>
</dbReference>
<dbReference type="PANTHER" id="PTHR42973:SF13">
    <property type="entry name" value="FAD-BINDING PCMH-TYPE DOMAIN-CONTAINING PROTEIN"/>
    <property type="match status" value="1"/>
</dbReference>
<dbReference type="Pfam" id="PF01565">
    <property type="entry name" value="FAD_binding_4"/>
    <property type="match status" value="1"/>
</dbReference>
<dbReference type="SUPFAM" id="SSF56176">
    <property type="entry name" value="FAD-binding/transporter-associated domain-like"/>
    <property type="match status" value="1"/>
</dbReference>
<dbReference type="PROSITE" id="PS51387">
    <property type="entry name" value="FAD_PCMH"/>
    <property type="match status" value="1"/>
</dbReference>
<name>FUP4_FUSPR</name>
<sequence>MRQSSTLTWTSVLLAPLAASKGLIADYASCQSACVSLSSQLSVESVGNYIAEFEQQPIAGAGVEAGSLYWSQQQQALRPACLVHAREAQDVALVVQTSRSTGCPFAVRGGGHSDIPGFSNSHGGITVNMAGLGDVKVDASAGVARIGAGAKWGAVFKELDKTNKTVVGGRLTGVGVGGLLLGGGLSHLSGLHGLACDNVRNYEIVLANGSIFDVSHSTHPDLYRALRGGGNNFGVVTRFDLDLYDQGPMWGGLHVWPLLPSVTSAITSAFAEFGHEAPSDKHVSLFAGLGFMQGNFAWAVGQYDTLGREEPPIFSKFRDDAETYGAPKLVKTARVTSLSDLAEELNLSEPAGMRSRFTTATFRMDVDLLQLMAGYFVEEVERALENGLREDKRFAPMLGIQPLTKNILRAQSKRGGNVMGLDEESGPLIVCSFGWEWFRETDDAVVIAGIKSVLEKSVAAAKEKGLYHPFKYMNYAAEDQDPIASYGAENVEFLKKVRHTYDSDGLFMKLVPGGHKI</sequence>
<accession>A0A1L7VET6</accession>
<keyword id="KW-0274">FAD</keyword>
<keyword id="KW-0285">Flavoprotein</keyword>
<keyword id="KW-0325">Glycoprotein</keyword>
<keyword id="KW-0560">Oxidoreductase</keyword>
<keyword id="KW-0732">Signal</keyword>